<dbReference type="EC" id="3.2.1.52" evidence="1"/>
<dbReference type="EMBL" id="CP000941">
    <property type="protein sequence ID" value="ACA12439.1"/>
    <property type="molecule type" value="Genomic_DNA"/>
</dbReference>
<dbReference type="RefSeq" id="WP_004085825.1">
    <property type="nucleotide sequence ID" value="NC_010513.1"/>
</dbReference>
<dbReference type="SMR" id="B0U3L0"/>
<dbReference type="CAZy" id="GH3">
    <property type="family name" value="Glycoside Hydrolase Family 3"/>
</dbReference>
<dbReference type="KEGG" id="xfm:Xfasm12_1525"/>
<dbReference type="HOGENOM" id="CLU_008392_0_0_6"/>
<dbReference type="UniPathway" id="UPA00544"/>
<dbReference type="GO" id="GO:0005737">
    <property type="term" value="C:cytoplasm"/>
    <property type="evidence" value="ECO:0007669"/>
    <property type="project" value="UniProtKB-SubCell"/>
</dbReference>
<dbReference type="GO" id="GO:0004563">
    <property type="term" value="F:beta-N-acetylhexosaminidase activity"/>
    <property type="evidence" value="ECO:0007669"/>
    <property type="project" value="UniProtKB-UniRule"/>
</dbReference>
<dbReference type="GO" id="GO:0005975">
    <property type="term" value="P:carbohydrate metabolic process"/>
    <property type="evidence" value="ECO:0007669"/>
    <property type="project" value="InterPro"/>
</dbReference>
<dbReference type="GO" id="GO:0051301">
    <property type="term" value="P:cell division"/>
    <property type="evidence" value="ECO:0007669"/>
    <property type="project" value="UniProtKB-KW"/>
</dbReference>
<dbReference type="GO" id="GO:0071555">
    <property type="term" value="P:cell wall organization"/>
    <property type="evidence" value="ECO:0007669"/>
    <property type="project" value="UniProtKB-KW"/>
</dbReference>
<dbReference type="GO" id="GO:0009252">
    <property type="term" value="P:peptidoglycan biosynthetic process"/>
    <property type="evidence" value="ECO:0007669"/>
    <property type="project" value="UniProtKB-KW"/>
</dbReference>
<dbReference type="GO" id="GO:0009254">
    <property type="term" value="P:peptidoglycan turnover"/>
    <property type="evidence" value="ECO:0007669"/>
    <property type="project" value="UniProtKB-UniRule"/>
</dbReference>
<dbReference type="GO" id="GO:0008360">
    <property type="term" value="P:regulation of cell shape"/>
    <property type="evidence" value="ECO:0007669"/>
    <property type="project" value="UniProtKB-KW"/>
</dbReference>
<dbReference type="Gene3D" id="3.20.20.300">
    <property type="entry name" value="Glycoside hydrolase, family 3, N-terminal domain"/>
    <property type="match status" value="1"/>
</dbReference>
<dbReference type="HAMAP" id="MF_00364">
    <property type="entry name" value="NagZ"/>
    <property type="match status" value="1"/>
</dbReference>
<dbReference type="InterPro" id="IPR022956">
    <property type="entry name" value="Beta_hexosaminidase_bac"/>
</dbReference>
<dbReference type="InterPro" id="IPR019800">
    <property type="entry name" value="Glyco_hydro_3_AS"/>
</dbReference>
<dbReference type="InterPro" id="IPR001764">
    <property type="entry name" value="Glyco_hydro_3_N"/>
</dbReference>
<dbReference type="InterPro" id="IPR036962">
    <property type="entry name" value="Glyco_hydro_3_N_sf"/>
</dbReference>
<dbReference type="InterPro" id="IPR017853">
    <property type="entry name" value="Glycoside_hydrolase_SF"/>
</dbReference>
<dbReference type="InterPro" id="IPR050226">
    <property type="entry name" value="NagZ_Beta-hexosaminidase"/>
</dbReference>
<dbReference type="NCBIfam" id="NF003740">
    <property type="entry name" value="PRK05337.1"/>
    <property type="match status" value="1"/>
</dbReference>
<dbReference type="PANTHER" id="PTHR30480:SF13">
    <property type="entry name" value="BETA-HEXOSAMINIDASE"/>
    <property type="match status" value="1"/>
</dbReference>
<dbReference type="PANTHER" id="PTHR30480">
    <property type="entry name" value="BETA-HEXOSAMINIDASE-RELATED"/>
    <property type="match status" value="1"/>
</dbReference>
<dbReference type="Pfam" id="PF00933">
    <property type="entry name" value="Glyco_hydro_3"/>
    <property type="match status" value="1"/>
</dbReference>
<dbReference type="SUPFAM" id="SSF51445">
    <property type="entry name" value="(Trans)glycosidases"/>
    <property type="match status" value="1"/>
</dbReference>
<dbReference type="PROSITE" id="PS00775">
    <property type="entry name" value="GLYCOSYL_HYDROL_F3"/>
    <property type="match status" value="1"/>
</dbReference>
<evidence type="ECO:0000255" key="1">
    <source>
        <dbReference type="HAMAP-Rule" id="MF_00364"/>
    </source>
</evidence>
<protein>
    <recommendedName>
        <fullName evidence="1">Beta-hexosaminidase</fullName>
        <ecNumber evidence="1">3.2.1.52</ecNumber>
    </recommendedName>
    <alternativeName>
        <fullName evidence="1">Beta-N-acetylhexosaminidase</fullName>
    </alternativeName>
    <alternativeName>
        <fullName evidence="1">N-acetyl-beta-glucosaminidase</fullName>
    </alternativeName>
</protein>
<reference key="1">
    <citation type="journal article" date="2010" name="J. Bacteriol.">
        <title>Whole genome sequences of two Xylella fastidiosa strains (M12 and M23) causing almond leaf scorch disease in California.</title>
        <authorList>
            <person name="Chen J."/>
            <person name="Xie G."/>
            <person name="Han S."/>
            <person name="Chertkov O."/>
            <person name="Sims D."/>
            <person name="Civerolo E.L."/>
        </authorList>
    </citation>
    <scope>NUCLEOTIDE SEQUENCE [LARGE SCALE GENOMIC DNA]</scope>
    <source>
        <strain>M12</strain>
    </source>
</reference>
<feature type="chain" id="PRO_1000121079" description="Beta-hexosaminidase">
    <location>
        <begin position="1"/>
        <end position="335"/>
    </location>
</feature>
<feature type="active site" description="Proton donor/acceptor" evidence="1">
    <location>
        <position position="176"/>
    </location>
</feature>
<feature type="active site" description="Nucleophile" evidence="1">
    <location>
        <position position="247"/>
    </location>
</feature>
<feature type="binding site" evidence="1">
    <location>
        <position position="60"/>
    </location>
    <ligand>
        <name>substrate</name>
    </ligand>
</feature>
<feature type="binding site" evidence="1">
    <location>
        <position position="68"/>
    </location>
    <ligand>
        <name>substrate</name>
    </ligand>
</feature>
<feature type="binding site" evidence="1">
    <location>
        <position position="133"/>
    </location>
    <ligand>
        <name>substrate</name>
    </ligand>
</feature>
<feature type="binding site" evidence="1">
    <location>
        <begin position="163"/>
        <end position="164"/>
    </location>
    <ligand>
        <name>substrate</name>
    </ligand>
</feature>
<feature type="site" description="Important for catalytic activity" evidence="1">
    <location>
        <position position="174"/>
    </location>
</feature>
<keyword id="KW-0131">Cell cycle</keyword>
<keyword id="KW-0132">Cell division</keyword>
<keyword id="KW-0133">Cell shape</keyword>
<keyword id="KW-0961">Cell wall biogenesis/degradation</keyword>
<keyword id="KW-0963">Cytoplasm</keyword>
<keyword id="KW-0326">Glycosidase</keyword>
<keyword id="KW-0378">Hydrolase</keyword>
<keyword id="KW-0573">Peptidoglycan synthesis</keyword>
<organism>
    <name type="scientific">Xylella fastidiosa (strain M12)</name>
    <dbReference type="NCBI Taxonomy" id="405440"/>
    <lineage>
        <taxon>Bacteria</taxon>
        <taxon>Pseudomonadati</taxon>
        <taxon>Pseudomonadota</taxon>
        <taxon>Gammaproteobacteria</taxon>
        <taxon>Lysobacterales</taxon>
        <taxon>Lysobacteraceae</taxon>
        <taxon>Xylella</taxon>
    </lineage>
</organism>
<sequence length="335" mass="35341">MLLIGVAGTTLSAQEVDWLQDDAVAGVVLFKRNFASRAQIVELSAALREAAPRPLLLAVDQEGGRVQRFYEGYSALPPLQGIGALYVRDPEAALELAFEHAWLMASEVRASGVDLSFAPVVDLGRGNRAIGDRAFSDDPHVVAAFAQAYVQGMHAAGMPVTLKHFPGHGSVLEDTHVDLAVDVRPLETLESEDLVPFAAGIAAGADAVMMAHVVYPNVAPETAGFSAHWIEVILRGRMGFRGVVFSDDIGMAAVRGVGGVVGCVHAHLDAGCDVVLVCHPELVNDALSAVAGRRSNTAALIGLIGRGALGWDGLLADVRYGSIQSRLFERFGTST</sequence>
<comment type="function">
    <text evidence="1">Plays a role in peptidoglycan recycling by cleaving the terminal beta-1,4-linked N-acetylglucosamine (GlcNAc) from peptide-linked peptidoglycan fragments, giving rise to free GlcNAc, anhydro-N-acetylmuramic acid and anhydro-N-acetylmuramic acid-linked peptides.</text>
</comment>
<comment type="catalytic activity">
    <reaction evidence="1">
        <text>Hydrolysis of terminal non-reducing N-acetyl-D-hexosamine residues in N-acetyl-beta-D-hexosaminides.</text>
        <dbReference type="EC" id="3.2.1.52"/>
    </reaction>
</comment>
<comment type="pathway">
    <text evidence="1">Cell wall biogenesis; peptidoglycan recycling.</text>
</comment>
<comment type="subcellular location">
    <subcellularLocation>
        <location evidence="1">Cytoplasm</location>
    </subcellularLocation>
</comment>
<comment type="similarity">
    <text evidence="1">Belongs to the glycosyl hydrolase 3 family. NagZ subfamily.</text>
</comment>
<name>NAGZ_XYLFM</name>
<gene>
    <name evidence="1" type="primary">nagZ</name>
    <name type="ordered locus">Xfasm12_1525</name>
</gene>
<proteinExistence type="inferred from homology"/>
<accession>B0U3L0</accession>